<protein>
    <recommendedName>
        <fullName evidence="1">Ribosome-recycling factor</fullName>
        <shortName evidence="1">RRF</shortName>
    </recommendedName>
    <alternativeName>
        <fullName evidence="1">Ribosome-releasing factor</fullName>
    </alternativeName>
</protein>
<reference key="1">
    <citation type="journal article" date="2007" name="Genome Res.">
        <title>Genome characteristics of facultatively symbiotic Frankia sp. strains reflect host range and host plant biogeography.</title>
        <authorList>
            <person name="Normand P."/>
            <person name="Lapierre P."/>
            <person name="Tisa L.S."/>
            <person name="Gogarten J.P."/>
            <person name="Alloisio N."/>
            <person name="Bagnarol E."/>
            <person name="Bassi C.A."/>
            <person name="Berry A.M."/>
            <person name="Bickhart D.M."/>
            <person name="Choisne N."/>
            <person name="Couloux A."/>
            <person name="Cournoyer B."/>
            <person name="Cruveiller S."/>
            <person name="Daubin V."/>
            <person name="Demange N."/>
            <person name="Francino M.P."/>
            <person name="Goltsman E."/>
            <person name="Huang Y."/>
            <person name="Kopp O.R."/>
            <person name="Labarre L."/>
            <person name="Lapidus A."/>
            <person name="Lavire C."/>
            <person name="Marechal J."/>
            <person name="Martinez M."/>
            <person name="Mastronunzio J.E."/>
            <person name="Mullin B.C."/>
            <person name="Niemann J."/>
            <person name="Pujic P."/>
            <person name="Rawnsley T."/>
            <person name="Rouy Z."/>
            <person name="Schenowitz C."/>
            <person name="Sellstedt A."/>
            <person name="Tavares F."/>
            <person name="Tomkins J.P."/>
            <person name="Vallenet D."/>
            <person name="Valverde C."/>
            <person name="Wall L.G."/>
            <person name="Wang Y."/>
            <person name="Medigue C."/>
            <person name="Benson D.R."/>
        </authorList>
    </citation>
    <scope>NUCLEOTIDE SEQUENCE [LARGE SCALE GENOMIC DNA]</scope>
    <source>
        <strain>DSM 45818 / CECT 9043 / HFP020203 / CcI3</strain>
    </source>
</reference>
<proteinExistence type="inferred from homology"/>
<organism>
    <name type="scientific">Frankia casuarinae (strain DSM 45818 / CECT 9043 / HFP020203 / CcI3)</name>
    <dbReference type="NCBI Taxonomy" id="106370"/>
    <lineage>
        <taxon>Bacteria</taxon>
        <taxon>Bacillati</taxon>
        <taxon>Actinomycetota</taxon>
        <taxon>Actinomycetes</taxon>
        <taxon>Frankiales</taxon>
        <taxon>Frankiaceae</taxon>
        <taxon>Frankia</taxon>
    </lineage>
</organism>
<comment type="function">
    <text evidence="1">Responsible for the release of ribosomes from messenger RNA at the termination of protein biosynthesis. May increase the efficiency of translation by recycling ribosomes from one round of translation to another.</text>
</comment>
<comment type="subcellular location">
    <subcellularLocation>
        <location evidence="1">Cytoplasm</location>
    </subcellularLocation>
</comment>
<comment type="similarity">
    <text evidence="1">Belongs to the RRF family.</text>
</comment>
<gene>
    <name evidence="1" type="primary">frr</name>
    <name type="ordered locus">Francci3_3579</name>
</gene>
<keyword id="KW-0963">Cytoplasm</keyword>
<keyword id="KW-0648">Protein biosynthesis</keyword>
<keyword id="KW-1185">Reference proteome</keyword>
<accession>Q2J711</accession>
<sequence length="185" mass="20831">MIDDTLLEAEEKMEKAVSVAREDFANIRTGRITPAVFSKILVDYYGAPTPVQQLASFHIPEPRMVIITPYDKSSLGAIEKAVRDSDLGVNPSNDGTIIRCVFPELSEQRRRDLVKVARTKAEEARVSIRNVRRHAKDTIDRIVRDGDAGEDEGRRGEKDLDEATHRYVGQVDELLRLKESDLLSV</sequence>
<feature type="chain" id="PRO_1000003163" description="Ribosome-recycling factor">
    <location>
        <begin position="1"/>
        <end position="185"/>
    </location>
</feature>
<name>RRF_FRACC</name>
<evidence type="ECO:0000255" key="1">
    <source>
        <dbReference type="HAMAP-Rule" id="MF_00040"/>
    </source>
</evidence>
<dbReference type="EMBL" id="CP000249">
    <property type="protein sequence ID" value="ABD12931.1"/>
    <property type="molecule type" value="Genomic_DNA"/>
</dbReference>
<dbReference type="RefSeq" id="WP_011437955.1">
    <property type="nucleotide sequence ID" value="NZ_JENI01000005.1"/>
</dbReference>
<dbReference type="SMR" id="Q2J711"/>
<dbReference type="STRING" id="106370.Francci3_3579"/>
<dbReference type="KEGG" id="fra:Francci3_3579"/>
<dbReference type="eggNOG" id="COG0233">
    <property type="taxonomic scope" value="Bacteria"/>
</dbReference>
<dbReference type="HOGENOM" id="CLU_073981_2_0_11"/>
<dbReference type="OrthoDB" id="9804006at2"/>
<dbReference type="PhylomeDB" id="Q2J711"/>
<dbReference type="Proteomes" id="UP000001937">
    <property type="component" value="Chromosome"/>
</dbReference>
<dbReference type="GO" id="GO:0005737">
    <property type="term" value="C:cytoplasm"/>
    <property type="evidence" value="ECO:0007669"/>
    <property type="project" value="UniProtKB-SubCell"/>
</dbReference>
<dbReference type="GO" id="GO:0043023">
    <property type="term" value="F:ribosomal large subunit binding"/>
    <property type="evidence" value="ECO:0007669"/>
    <property type="project" value="TreeGrafter"/>
</dbReference>
<dbReference type="GO" id="GO:0006415">
    <property type="term" value="P:translational termination"/>
    <property type="evidence" value="ECO:0007669"/>
    <property type="project" value="UniProtKB-UniRule"/>
</dbReference>
<dbReference type="CDD" id="cd00520">
    <property type="entry name" value="RRF"/>
    <property type="match status" value="1"/>
</dbReference>
<dbReference type="FunFam" id="1.10.132.20:FF:000001">
    <property type="entry name" value="Ribosome-recycling factor"/>
    <property type="match status" value="1"/>
</dbReference>
<dbReference type="FunFam" id="3.30.1360.40:FF:000001">
    <property type="entry name" value="Ribosome-recycling factor"/>
    <property type="match status" value="1"/>
</dbReference>
<dbReference type="Gene3D" id="3.30.1360.40">
    <property type="match status" value="1"/>
</dbReference>
<dbReference type="Gene3D" id="1.10.132.20">
    <property type="entry name" value="Ribosome-recycling factor"/>
    <property type="match status" value="1"/>
</dbReference>
<dbReference type="HAMAP" id="MF_00040">
    <property type="entry name" value="RRF"/>
    <property type="match status" value="1"/>
</dbReference>
<dbReference type="InterPro" id="IPR002661">
    <property type="entry name" value="Ribosome_recyc_fac"/>
</dbReference>
<dbReference type="InterPro" id="IPR023584">
    <property type="entry name" value="Ribosome_recyc_fac_dom"/>
</dbReference>
<dbReference type="InterPro" id="IPR036191">
    <property type="entry name" value="RRF_sf"/>
</dbReference>
<dbReference type="NCBIfam" id="TIGR00496">
    <property type="entry name" value="frr"/>
    <property type="match status" value="1"/>
</dbReference>
<dbReference type="PANTHER" id="PTHR20982:SF3">
    <property type="entry name" value="MITOCHONDRIAL RIBOSOME RECYCLING FACTOR PSEUDO 1"/>
    <property type="match status" value="1"/>
</dbReference>
<dbReference type="PANTHER" id="PTHR20982">
    <property type="entry name" value="RIBOSOME RECYCLING FACTOR"/>
    <property type="match status" value="1"/>
</dbReference>
<dbReference type="Pfam" id="PF01765">
    <property type="entry name" value="RRF"/>
    <property type="match status" value="1"/>
</dbReference>
<dbReference type="SUPFAM" id="SSF55194">
    <property type="entry name" value="Ribosome recycling factor, RRF"/>
    <property type="match status" value="1"/>
</dbReference>